<gene>
    <name evidence="1" type="primary">hemC</name>
    <name type="ordered locus">BCB4264_A4582</name>
</gene>
<accession>B7HE96</accession>
<organism>
    <name type="scientific">Bacillus cereus (strain B4264)</name>
    <dbReference type="NCBI Taxonomy" id="405532"/>
    <lineage>
        <taxon>Bacteria</taxon>
        <taxon>Bacillati</taxon>
        <taxon>Bacillota</taxon>
        <taxon>Bacilli</taxon>
        <taxon>Bacillales</taxon>
        <taxon>Bacillaceae</taxon>
        <taxon>Bacillus</taxon>
        <taxon>Bacillus cereus group</taxon>
    </lineage>
</organism>
<proteinExistence type="inferred from homology"/>
<reference key="1">
    <citation type="submission" date="2008-10" db="EMBL/GenBank/DDBJ databases">
        <title>Genome sequence of Bacillus cereus B4264.</title>
        <authorList>
            <person name="Dodson R.J."/>
            <person name="Durkin A.S."/>
            <person name="Rosovitz M.J."/>
            <person name="Rasko D.A."/>
            <person name="Hoffmaster A."/>
            <person name="Ravel J."/>
            <person name="Sutton G."/>
        </authorList>
    </citation>
    <scope>NUCLEOTIDE SEQUENCE [LARGE SCALE GENOMIC DNA]</scope>
    <source>
        <strain>B4264</strain>
    </source>
</reference>
<dbReference type="EC" id="2.5.1.61" evidence="1"/>
<dbReference type="EMBL" id="CP001176">
    <property type="protein sequence ID" value="ACK63178.1"/>
    <property type="molecule type" value="Genomic_DNA"/>
</dbReference>
<dbReference type="RefSeq" id="WP_001226407.1">
    <property type="nucleotide sequence ID" value="NZ_VEHB01000006.1"/>
</dbReference>
<dbReference type="SMR" id="B7HE96"/>
<dbReference type="KEGG" id="bcb:BCB4264_A4582"/>
<dbReference type="HOGENOM" id="CLU_019704_0_2_9"/>
<dbReference type="UniPathway" id="UPA00251">
    <property type="reaction ID" value="UER00319"/>
</dbReference>
<dbReference type="Proteomes" id="UP000007096">
    <property type="component" value="Chromosome"/>
</dbReference>
<dbReference type="GO" id="GO:0005737">
    <property type="term" value="C:cytoplasm"/>
    <property type="evidence" value="ECO:0007669"/>
    <property type="project" value="TreeGrafter"/>
</dbReference>
<dbReference type="GO" id="GO:0004418">
    <property type="term" value="F:hydroxymethylbilane synthase activity"/>
    <property type="evidence" value="ECO:0007669"/>
    <property type="project" value="UniProtKB-UniRule"/>
</dbReference>
<dbReference type="GO" id="GO:0006782">
    <property type="term" value="P:protoporphyrinogen IX biosynthetic process"/>
    <property type="evidence" value="ECO:0007669"/>
    <property type="project" value="UniProtKB-UniRule"/>
</dbReference>
<dbReference type="CDD" id="cd13646">
    <property type="entry name" value="PBP2_EcHMBS_like"/>
    <property type="match status" value="1"/>
</dbReference>
<dbReference type="FunFam" id="3.30.160.40:FF:000001">
    <property type="entry name" value="Porphobilinogen deaminase"/>
    <property type="match status" value="1"/>
</dbReference>
<dbReference type="FunFam" id="3.40.190.10:FF:000004">
    <property type="entry name" value="Porphobilinogen deaminase"/>
    <property type="match status" value="1"/>
</dbReference>
<dbReference type="FunFam" id="3.40.190.10:FF:000005">
    <property type="entry name" value="Porphobilinogen deaminase"/>
    <property type="match status" value="1"/>
</dbReference>
<dbReference type="Gene3D" id="3.40.190.10">
    <property type="entry name" value="Periplasmic binding protein-like II"/>
    <property type="match status" value="2"/>
</dbReference>
<dbReference type="Gene3D" id="3.30.160.40">
    <property type="entry name" value="Porphobilinogen deaminase, C-terminal domain"/>
    <property type="match status" value="1"/>
</dbReference>
<dbReference type="HAMAP" id="MF_00260">
    <property type="entry name" value="Porphobil_deam"/>
    <property type="match status" value="1"/>
</dbReference>
<dbReference type="InterPro" id="IPR000860">
    <property type="entry name" value="HemC"/>
</dbReference>
<dbReference type="InterPro" id="IPR022419">
    <property type="entry name" value="Porphobilin_deaminase_cofac_BS"/>
</dbReference>
<dbReference type="InterPro" id="IPR022417">
    <property type="entry name" value="Porphobilin_deaminase_N"/>
</dbReference>
<dbReference type="InterPro" id="IPR022418">
    <property type="entry name" value="Porphobilinogen_deaminase_C"/>
</dbReference>
<dbReference type="InterPro" id="IPR036803">
    <property type="entry name" value="Porphobilinogen_deaminase_C_sf"/>
</dbReference>
<dbReference type="NCBIfam" id="TIGR00212">
    <property type="entry name" value="hemC"/>
    <property type="match status" value="1"/>
</dbReference>
<dbReference type="PANTHER" id="PTHR11557">
    <property type="entry name" value="PORPHOBILINOGEN DEAMINASE"/>
    <property type="match status" value="1"/>
</dbReference>
<dbReference type="PANTHER" id="PTHR11557:SF0">
    <property type="entry name" value="PORPHOBILINOGEN DEAMINASE"/>
    <property type="match status" value="1"/>
</dbReference>
<dbReference type="Pfam" id="PF01379">
    <property type="entry name" value="Porphobil_deam"/>
    <property type="match status" value="1"/>
</dbReference>
<dbReference type="Pfam" id="PF03900">
    <property type="entry name" value="Porphobil_deamC"/>
    <property type="match status" value="1"/>
</dbReference>
<dbReference type="PIRSF" id="PIRSF001438">
    <property type="entry name" value="4pyrrol_synth_OHMeBilane_synth"/>
    <property type="match status" value="1"/>
</dbReference>
<dbReference type="PRINTS" id="PR00151">
    <property type="entry name" value="PORPHBDMNASE"/>
</dbReference>
<dbReference type="SUPFAM" id="SSF53850">
    <property type="entry name" value="Periplasmic binding protein-like II"/>
    <property type="match status" value="1"/>
</dbReference>
<dbReference type="SUPFAM" id="SSF54782">
    <property type="entry name" value="Porphobilinogen deaminase (hydroxymethylbilane synthase), C-terminal domain"/>
    <property type="match status" value="1"/>
</dbReference>
<dbReference type="PROSITE" id="PS00533">
    <property type="entry name" value="PORPHOBILINOGEN_DEAM"/>
    <property type="match status" value="1"/>
</dbReference>
<comment type="function">
    <text evidence="1">Tetrapolymerization of the monopyrrole PBG into the hydroxymethylbilane pre-uroporphyrinogen in several discrete steps.</text>
</comment>
<comment type="catalytic activity">
    <reaction evidence="1">
        <text>4 porphobilinogen + H2O = hydroxymethylbilane + 4 NH4(+)</text>
        <dbReference type="Rhea" id="RHEA:13185"/>
        <dbReference type="ChEBI" id="CHEBI:15377"/>
        <dbReference type="ChEBI" id="CHEBI:28938"/>
        <dbReference type="ChEBI" id="CHEBI:57845"/>
        <dbReference type="ChEBI" id="CHEBI:58126"/>
        <dbReference type="EC" id="2.5.1.61"/>
    </reaction>
</comment>
<comment type="cofactor">
    <cofactor evidence="1">
        <name>dipyrromethane</name>
        <dbReference type="ChEBI" id="CHEBI:60342"/>
    </cofactor>
    <text evidence="1">Binds 1 dipyrromethane group covalently.</text>
</comment>
<comment type="pathway">
    <text evidence="1">Porphyrin-containing compound metabolism; protoporphyrin-IX biosynthesis; coproporphyrinogen-III from 5-aminolevulinate: step 2/4.</text>
</comment>
<comment type="subunit">
    <text evidence="1">Monomer.</text>
</comment>
<comment type="miscellaneous">
    <text evidence="1">The porphobilinogen subunits are added to the dipyrromethane group.</text>
</comment>
<comment type="similarity">
    <text evidence="1">Belongs to the HMBS family.</text>
</comment>
<protein>
    <recommendedName>
        <fullName evidence="1">Porphobilinogen deaminase</fullName>
        <shortName evidence="1">PBG</shortName>
        <ecNumber evidence="1">2.5.1.61</ecNumber>
    </recommendedName>
    <alternativeName>
        <fullName evidence="1">Hydroxymethylbilane synthase</fullName>
        <shortName evidence="1">HMBS</shortName>
    </alternativeName>
    <alternativeName>
        <fullName evidence="1">Pre-uroporphyrinogen synthase</fullName>
    </alternativeName>
</protein>
<name>HEM3_BACC4</name>
<keyword id="KW-0627">Porphyrin biosynthesis</keyword>
<keyword id="KW-0808">Transferase</keyword>
<feature type="chain" id="PRO_1000119209" description="Porphobilinogen deaminase">
    <location>
        <begin position="1"/>
        <end position="309"/>
    </location>
</feature>
<feature type="modified residue" description="S-(dipyrrolylmethanemethyl)cysteine" evidence="1">
    <location>
        <position position="241"/>
    </location>
</feature>
<sequence>MRKIIVGSRKSKLALTQTNWFIDQLKALGLPYEFEVKEIVTKGDVILDVTLSKVGGKGLFVKEIEHALLTKEIDMAVHSMKDMPAVLPEGLMIGCTPKRVDPRDAFISKNGASFKELAEGAILGTSSLRRSAQLLAARPDLQVKWIRGNIDTRLRKLKEEDYDAIILATAGLQRMGWDNDVITEHLDDTLCVPAVGQGALAIECREDDKDLLQLLAHINDTITERTVAAERVFLHKLEGGCQVPIAGYATLTENDAIELTALVGSMDGSVLLKETVVGTNPEEVGLEAADRLIKQGAKELILAANKEQQ</sequence>
<evidence type="ECO:0000255" key="1">
    <source>
        <dbReference type="HAMAP-Rule" id="MF_00260"/>
    </source>
</evidence>